<organism>
    <name type="scientific">Hepatitis B virus genotype C subtype ar (isolate Japan/S-207/1988)</name>
    <name type="common">HBV-C</name>
    <dbReference type="NCBI Taxonomy" id="489467"/>
    <lineage>
        <taxon>Viruses</taxon>
        <taxon>Riboviria</taxon>
        <taxon>Pararnavirae</taxon>
        <taxon>Artverviricota</taxon>
        <taxon>Revtraviricetes</taxon>
        <taxon>Blubervirales</taxon>
        <taxon>Hepadnaviridae</taxon>
        <taxon>Orthohepadnavirus</taxon>
        <taxon>Hepatitis B virus</taxon>
        <taxon>hepatitis B virus genotype C</taxon>
    </lineage>
</organism>
<feature type="initiator methionine" description="Removed; by host" evidence="3">
    <location>
        <position position="1"/>
    </location>
</feature>
<feature type="chain" id="PRO_0000222357" description="Large envelope protein" evidence="3">
    <location>
        <begin position="2"/>
        <end position="400"/>
    </location>
</feature>
<feature type="topological domain" description="Intravirion; in internal conformation" evidence="3">
    <location>
        <begin position="2"/>
        <end position="253"/>
    </location>
</feature>
<feature type="topological domain" description="Virion surface; in external conformation" evidence="3">
    <location>
        <begin position="2"/>
        <end position="181"/>
    </location>
</feature>
<feature type="transmembrane region" description="Helical; Name=TM1; Note=In external conformation" evidence="3">
    <location>
        <begin position="182"/>
        <end position="202"/>
    </location>
</feature>
<feature type="topological domain" description="Intravirion; in external conformation" evidence="3">
    <location>
        <begin position="203"/>
        <end position="253"/>
    </location>
</feature>
<feature type="transmembrane region" description="Helical; Name=TM2" evidence="3">
    <location>
        <begin position="254"/>
        <end position="274"/>
    </location>
</feature>
<feature type="topological domain" description="Virion surface" evidence="3">
    <location>
        <begin position="275"/>
        <end position="348"/>
    </location>
</feature>
<feature type="transmembrane region" description="Helical" evidence="3">
    <location>
        <begin position="349"/>
        <end position="369"/>
    </location>
</feature>
<feature type="topological domain" description="Intravirion" evidence="3">
    <location>
        <begin position="370"/>
        <end position="375"/>
    </location>
</feature>
<feature type="transmembrane region" description="Helical; Name=TM3" evidence="3">
    <location>
        <begin position="376"/>
        <end position="398"/>
    </location>
</feature>
<feature type="topological domain" description="Virion surface" evidence="3">
    <location>
        <begin position="399"/>
        <end position="400"/>
    </location>
</feature>
<feature type="region of interest" description="Disordered" evidence="4">
    <location>
        <begin position="1"/>
        <end position="55"/>
    </location>
</feature>
<feature type="region of interest" description="Pre-S" evidence="3">
    <location>
        <begin position="2"/>
        <end position="174"/>
    </location>
</feature>
<feature type="region of interest" description="Pre-S1" evidence="3">
    <location>
        <begin position="2"/>
        <end position="119"/>
    </location>
</feature>
<feature type="region of interest" description="Disordered" evidence="4">
    <location>
        <begin position="85"/>
        <end position="118"/>
    </location>
</feature>
<feature type="region of interest" description="Pre-S2" evidence="3">
    <location>
        <begin position="120"/>
        <end position="174"/>
    </location>
</feature>
<feature type="compositionally biased region" description="Polar residues" evidence="4">
    <location>
        <begin position="96"/>
        <end position="106"/>
    </location>
</feature>
<feature type="lipid moiety-binding region" description="N-myristoyl glycine; by host" evidence="3">
    <location>
        <position position="2"/>
    </location>
</feature>
<feature type="glycosylation site" description="N-linked (GlcNAc...) asparagine; by host" evidence="3">
    <location>
        <position position="320"/>
    </location>
</feature>
<feature type="splice variant" id="VSP_031386" description="In isoform S." evidence="5">
    <location>
        <begin position="1"/>
        <end position="174"/>
    </location>
</feature>
<feature type="splice variant" id="VSP_031387" description="In isoform M." evidence="5">
    <location>
        <begin position="1"/>
        <end position="119"/>
    </location>
</feature>
<feature type="sequence variant">
    <original>A</original>
    <variation>S</variation>
    <location>
        <position position="219"/>
    </location>
</feature>
<feature type="sequence variant">
    <original>G</original>
    <variation>A</variation>
    <location>
        <position position="319"/>
    </location>
</feature>
<feature type="modified residue" description="N-acetylmethionine" evidence="5">
    <location sequence="P31869-2">
        <position position="1"/>
    </location>
</feature>
<feature type="glycosylation site" description="N-linked (GlcNAc...) asparagine" evidence="5">
    <location sequence="P31869-2">
        <position position="4"/>
    </location>
</feature>
<name>HBSAG_HBVC2</name>
<evidence type="ECO:0000250" key="1">
    <source>
        <dbReference type="UniProtKB" id="P03138"/>
    </source>
</evidence>
<evidence type="ECO:0000250" key="2">
    <source>
        <dbReference type="UniProtKB" id="P03141"/>
    </source>
</evidence>
<evidence type="ECO:0000255" key="3">
    <source>
        <dbReference type="HAMAP-Rule" id="MF_04075"/>
    </source>
</evidence>
<evidence type="ECO:0000256" key="4">
    <source>
        <dbReference type="SAM" id="MobiDB-lite"/>
    </source>
</evidence>
<evidence type="ECO:0000305" key="5"/>
<organismHost>
    <name type="scientific">Homo sapiens</name>
    <name type="common">Human</name>
    <dbReference type="NCBI Taxonomy" id="9606"/>
</organismHost>
<organismHost>
    <name type="scientific">Pan troglodytes</name>
    <name type="common">Chimpanzee</name>
    <dbReference type="NCBI Taxonomy" id="9598"/>
</organismHost>
<keyword id="KW-0007">Acetylation</keyword>
<keyword id="KW-0024">Alternative initiation</keyword>
<keyword id="KW-0025">Alternative splicing</keyword>
<keyword id="KW-1166">Caveolin-mediated endocytosis of virus by host</keyword>
<keyword id="KW-1170">Fusion of virus membrane with host endosomal membrane</keyword>
<keyword id="KW-1168">Fusion of virus membrane with host membrane</keyword>
<keyword id="KW-0325">Glycoprotein</keyword>
<keyword id="KW-0945">Host-virus interaction</keyword>
<keyword id="KW-0449">Lipoprotein</keyword>
<keyword id="KW-0472">Membrane</keyword>
<keyword id="KW-0519">Myristate</keyword>
<keyword id="KW-0812">Transmembrane</keyword>
<keyword id="KW-1133">Transmembrane helix</keyword>
<keyword id="KW-1161">Viral attachment to host cell</keyword>
<keyword id="KW-0261">Viral envelope protein</keyword>
<keyword id="KW-1162">Viral penetration into host cytoplasm</keyword>
<keyword id="KW-0946">Virion</keyword>
<keyword id="KW-1164">Virus endocytosis by host</keyword>
<keyword id="KW-1160">Virus entry into host cell</keyword>
<accession>P31869</accession>
<accession>Q9YZR4</accession>
<protein>
    <recommendedName>
        <fullName evidence="3">Large envelope protein</fullName>
    </recommendedName>
    <alternativeName>
        <fullName evidence="3">L glycoprotein</fullName>
    </alternativeName>
    <alternativeName>
        <fullName evidence="3">L-HBsAg</fullName>
        <shortName evidence="3">LHB</shortName>
    </alternativeName>
    <alternativeName>
        <fullName evidence="3">Large S protein</fullName>
    </alternativeName>
    <alternativeName>
        <fullName evidence="3">Large surface protein</fullName>
    </alternativeName>
    <alternativeName>
        <fullName evidence="3">Major surface antigen</fullName>
    </alternativeName>
</protein>
<proteinExistence type="evidence at protein level"/>
<sequence>MGGWSSKPRQGMGTNLSVPNPLGFFPDHQLDPAFGANSNNPDWDFNPNKDHWPEANQVGAGAFGPGFTPPHGGLLGWSPQAQGILTTVPAAPPPASTNRQSGRQPTPISPPLRDSHPQAMQWNSTTFHQALLDPRVKGLYFPAGGSSSGTVNPVPTTASPISSIFSRTGDPAPNMESTTSGFLGPLLVLQAGFFLLTRILTIPQSLDSWWTSLNFLGGAPTCPGQNSQSPTSNHSPTSCPPICPGYRWMCLRRFIIFLFILLLCLIFLLVLLDFQGMLPVCPLLPGTSTTSTGPCKTCTIPAQGTSMFPSCCCTKPSDGNCTCIPIPSSWAFARFLWEWASVRFSWLSLLVPFVQWFAGLSPTVWLSVIWMMWYWGPSLYNILSPFLPLLPIFFCLWVYI</sequence>
<comment type="function">
    <text evidence="3">The large envelope protein exists in two topological conformations, one which is termed 'external' or Le-HBsAg and the other 'internal' or Li-HBsAg. In its external conformation the protein attaches the virus to cell receptors and thereby initiating infection. This interaction determines the species specificity and liver tropism. This attachment induces virion internalization predominantly through caveolin-mediated endocytosis. The large envelope protein also assures fusion between virion membrane and endosomal membrane. In its internal conformation the protein plays a role in virion morphogenesis and mediates the contact with the nucleocapsid like a matrix protein.</text>
</comment>
<comment type="function">
    <text evidence="3">The middle envelope protein plays an important role in the budding of the virion. It is involved in the induction of budding in a nucleocapsid independent way. In this process the majority of envelope proteins bud to form subviral lipoprotein particles of 22 nm of diameter that do not contain a nucleocapsid.</text>
</comment>
<comment type="subunit">
    <molecule>Isoform L</molecule>
    <text evidence="2">In its internal form (Li-HBsAg), interacts with the capsid protein and with the isoform S. Interacts with host chaperone CANX.</text>
</comment>
<comment type="subunit">
    <molecule>Isoform M</molecule>
    <text evidence="2">Associates with host chaperone CANX through its pre-S2 N glycan; this association may be essential for isoform M proper secretion.</text>
</comment>
<comment type="subunit">
    <molecule>Isoform S</molecule>
    <text evidence="2">Interacts with isoform L. Interacts with the antigens of satellite virus HDV (HDVAgs); this interaction is required for encapsidation of HDV genomic RNA.</text>
</comment>
<comment type="subcellular location">
    <subcellularLocation>
        <location evidence="3">Virion membrane</location>
    </subcellularLocation>
</comment>
<comment type="alternative products">
    <event type="alternative splicing"/>
    <event type="alternative initiation"/>
    <isoform>
        <id>P31869-1</id>
        <name>L</name>
        <name>Large envelope protein</name>
        <name>LHB</name>
        <name>L-HBsAg</name>
        <sequence type="displayed"/>
    </isoform>
    <isoform>
        <id>P31869-2</id>
        <name>M</name>
        <name>Middle envelope protein</name>
        <name>MHB</name>
        <name>M-HBsAg</name>
        <sequence type="described" ref="VSP_031387"/>
    </isoform>
    <isoform>
        <id>P31869-3</id>
        <name>S</name>
        <name>Small envelope protein</name>
        <name>SHB</name>
        <name>S-HBsAg</name>
        <sequence type="described" ref="VSP_031386"/>
    </isoform>
</comment>
<comment type="domain">
    <text evidence="3">The large envelope protein is synthesized with the pre-S region at the cytosolic side of the endoplasmic reticulum and, hence will be within the virion after budding. Therefore the pre-S region is not N-glycosylated. Later a post-translational translocation of N-terminal pre-S and TM1 domains occur in about 50% of proteins at the virion surface. These molecules change their topology by an unknown mechanism, resulting in exposure of pre-S region at virion surface. For isoform M in contrast, the pre-S2 region is translocated cotranslationally to the endoplasmic reticulum lumen and is N-glycosylated.</text>
</comment>
<comment type="PTM">
    <text evidence="1 3">Isoform M is N-terminally acetylated by host at a ratio of 90%, and N-glycosylated by host at the pre-S2 region.</text>
</comment>
<comment type="PTM">
    <text evidence="3">Myristoylated.</text>
</comment>
<comment type="biotechnology">
    <text>Systematic vaccination of individuals at risk of exposure to the virus has been the main method of controlling the morbidity and mortality associated with hepatitis B. The first hepatitis B vaccine was manufactured by the purification and inactivation of HBsAg obtained from the plasma of chronic hepatitis B virus carriers. The vaccine is now produced by recombinant DNA techniques and expression of the S isoform in yeast cells. The pre-S region do not seem to induce strong enough antigenic response.</text>
</comment>
<comment type="similarity">
    <text evidence="3">Belongs to the orthohepadnavirus major surface antigen family.</text>
</comment>
<comment type="sequence caution" evidence="5">
    <conflict type="erroneous initiation">
        <sequence resource="EMBL-CDS" id="AAA45519"/>
    </conflict>
</comment>
<dbReference type="EMBL" id="AB014394">
    <property type="protein sequence ID" value="BAA32958.1"/>
    <property type="molecule type" value="Genomic_DNA"/>
</dbReference>
<dbReference type="EMBL" id="M27766">
    <property type="protein sequence ID" value="AAA45519.1"/>
    <property type="status" value="ALT_INIT"/>
    <property type="molecule type" value="Genomic_DNA"/>
</dbReference>
<dbReference type="PIR" id="JQ2094">
    <property type="entry name" value="JQ2094"/>
</dbReference>
<dbReference type="PIR" id="JQ2095">
    <property type="entry name" value="JQ2095"/>
</dbReference>
<dbReference type="PIR" id="JQ2096">
    <property type="entry name" value="JQ2096"/>
</dbReference>
<dbReference type="PIR" id="JQ2097">
    <property type="entry name" value="JQ2097"/>
</dbReference>
<dbReference type="PIR" id="JQ2098">
    <property type="entry name" value="JQ2098"/>
</dbReference>
<dbReference type="PIR" id="JQ2099">
    <property type="entry name" value="JQ2099"/>
</dbReference>
<dbReference type="PIR" id="JQ2100">
    <property type="entry name" value="JQ2100"/>
</dbReference>
<dbReference type="PIR" id="JQ2101">
    <property type="entry name" value="JQ2101"/>
</dbReference>
<dbReference type="PIR" id="JQ2102">
    <property type="entry name" value="JQ2102"/>
</dbReference>
<dbReference type="PIR" id="JQ2106">
    <property type="entry name" value="JQ2106"/>
</dbReference>
<dbReference type="PIR" id="JQ2108">
    <property type="entry name" value="JQ2108"/>
</dbReference>
<dbReference type="PIR" id="JQ2109">
    <property type="entry name" value="JQ2109"/>
</dbReference>
<dbReference type="PIR" id="JQ2111">
    <property type="entry name" value="JQ2111"/>
</dbReference>
<dbReference type="PIR" id="JQ2112">
    <property type="entry name" value="JQ2112"/>
</dbReference>
<dbReference type="PIR" id="JQ2116">
    <property type="entry name" value="JQ2116"/>
</dbReference>
<dbReference type="PIR" id="PL0056">
    <property type="entry name" value="SAVLAR"/>
</dbReference>
<dbReference type="SMR" id="P31869"/>
<dbReference type="GlyCosmos" id="P31869">
    <property type="glycosylation" value="2 sites, No reported glycans"/>
</dbReference>
<dbReference type="Proteomes" id="UP000007922">
    <property type="component" value="Genome"/>
</dbReference>
<dbReference type="GO" id="GO:0016020">
    <property type="term" value="C:membrane"/>
    <property type="evidence" value="ECO:0007669"/>
    <property type="project" value="UniProtKB-UniRule"/>
</dbReference>
<dbReference type="GO" id="GO:0019031">
    <property type="term" value="C:viral envelope"/>
    <property type="evidence" value="ECO:0007669"/>
    <property type="project" value="UniProtKB-KW"/>
</dbReference>
<dbReference type="GO" id="GO:0055036">
    <property type="term" value="C:virion membrane"/>
    <property type="evidence" value="ECO:0007669"/>
    <property type="project" value="UniProtKB-SubCell"/>
</dbReference>
<dbReference type="GO" id="GO:0075513">
    <property type="term" value="P:caveolin-mediated endocytosis of virus by host cell"/>
    <property type="evidence" value="ECO:0007669"/>
    <property type="project" value="UniProtKB-KW"/>
</dbReference>
<dbReference type="GO" id="GO:0039654">
    <property type="term" value="P:fusion of virus membrane with host endosome membrane"/>
    <property type="evidence" value="ECO:0007669"/>
    <property type="project" value="UniProtKB-KW"/>
</dbReference>
<dbReference type="GO" id="GO:0019062">
    <property type="term" value="P:virion attachment to host cell"/>
    <property type="evidence" value="ECO:0007669"/>
    <property type="project" value="UniProtKB-UniRule"/>
</dbReference>
<dbReference type="HAMAP" id="MF_04075">
    <property type="entry name" value="HBV_HBSAG"/>
    <property type="match status" value="1"/>
</dbReference>
<dbReference type="InterPro" id="IPR000349">
    <property type="entry name" value="HBV_HBSAG"/>
</dbReference>
<dbReference type="Pfam" id="PF00695">
    <property type="entry name" value="vMSA"/>
    <property type="match status" value="1"/>
</dbReference>
<gene>
    <name evidence="3" type="primary">S</name>
</gene>
<reference key="1">
    <citation type="journal article" date="1998" name="Arch. Virol.">
        <title>Hepatitis B virus genomic sequence in the circulation of hepatocellular carcinoma patients: comparative analysis of 40 full-length isolates.</title>
        <authorList>
            <person name="Takahashi K."/>
            <person name="Akahane Y."/>
            <person name="Hino K."/>
            <person name="Ohta Y."/>
            <person name="Mishiro S."/>
        </authorList>
    </citation>
    <scope>NUCLEOTIDE SEQUENCE [GENOMIC DNA]</scope>
</reference>
<reference key="2">
    <citation type="journal article" date="1989" name="Mol. Immunol.">
        <title>The loss of subtypic determinants in alleles, d/y or w/r, on hepatitis B surface antigen.</title>
        <authorList>
            <person name="Okamoto H."/>
            <person name="Omi S."/>
            <person name="Wang Y."/>
            <person name="Itoh Y."/>
            <person name="Tsuda F."/>
            <person name="Tanaka T."/>
            <person name="Akahane Y."/>
            <person name="Miyakawa Y."/>
            <person name="Mayumi M."/>
        </authorList>
    </citation>
    <scope>NUCLEOTIDE SEQUENCE [GENOMIC DNA] OF 175-400</scope>
</reference>
<reference key="3">
    <citation type="journal article" date="1996" name="Intervirology">
        <title>Functions of the large hepatitis B virus surface protein in viral particle morphogenesis.</title>
        <authorList>
            <person name="Bruss V."/>
            <person name="Gerhardt E."/>
            <person name="Vieluf K."/>
            <person name="Wunderlich G."/>
        </authorList>
    </citation>
    <scope>REVIEW</scope>
</reference>
<reference key="4">
    <citation type="journal article" date="1998" name="Adv. Exp. Med. Biol.">
        <title>Role of glycan processing in hepatitis B virus envelope protein trafficking.</title>
        <authorList>
            <person name="Block T.M."/>
            <person name="Lu X."/>
            <person name="Mehta A."/>
            <person name="Park J."/>
            <person name="Blumberg B.S."/>
            <person name="Dwek R."/>
        </authorList>
    </citation>
    <scope>REVIEW</scope>
</reference>
<reference key="5">
    <citation type="journal article" date="2004" name="Virus Res.">
        <title>Envelopment of the hepatitis B virus nucleocapsid.</title>
        <authorList>
            <person name="Bruss V."/>
        </authorList>
    </citation>
    <scope>REVIEW</scope>
</reference>
<reference key="6">
    <citation type="journal article" date="2006" name="Cancer Sci.">
        <title>Hepatitis B virus pre-S mutants, endoplasmic reticulum stress and hepatocarcinogenesis.</title>
        <authorList>
            <person name="Wang H.C."/>
            <person name="Huang W."/>
            <person name="Lai M.D."/>
            <person name="Su I.J."/>
        </authorList>
    </citation>
    <scope>REVIEW</scope>
</reference>